<keyword id="KW-0472">Membrane</keyword>
<keyword id="KW-0496">Mitochondrion</keyword>
<keyword id="KW-1000">Mitochondrion outer membrane</keyword>
<keyword id="KW-1185">Reference proteome</keyword>
<keyword id="KW-0812">Transmembrane</keyword>
<keyword id="KW-1133">Transmembrane helix</keyword>
<gene>
    <name type="ordered locus">YJL133C-A</name>
</gene>
<sequence>MIAQSTRLAAAVSSSAASAGVSRIAASAMASTIFKRSPGNSFNSFKEYRENAKTYGPLSASLATRRHLAHAPKL</sequence>
<accession>Q3E7A3</accession>
<accession>D6VW51</accession>
<comment type="subcellular location">
    <subcellularLocation>
        <location evidence="2">Mitochondrion outer membrane</location>
        <topology evidence="2">Single-pass membrane protein</topology>
    </subcellularLocation>
</comment>
<evidence type="ECO:0000255" key="1"/>
<evidence type="ECO:0000269" key="2">
    <source>
    </source>
</evidence>
<proteinExistence type="evidence at protein level"/>
<dbReference type="EMBL" id="Z49408">
    <property type="status" value="NOT_ANNOTATED_CDS"/>
    <property type="molecule type" value="Genomic_DNA"/>
</dbReference>
<dbReference type="EMBL" id="BK006943">
    <property type="protein sequence ID" value="DAA08667.1"/>
    <property type="molecule type" value="Genomic_DNA"/>
</dbReference>
<dbReference type="BioGRID" id="37007">
    <property type="interactions" value="137"/>
</dbReference>
<dbReference type="FunCoup" id="Q3E7A3">
    <property type="interactions" value="1"/>
</dbReference>
<dbReference type="STRING" id="4932.YJL133C-A"/>
<dbReference type="iPTMnet" id="Q3E7A3"/>
<dbReference type="PaxDb" id="4932-YJL133C-A"/>
<dbReference type="PeptideAtlas" id="Q3E7A3"/>
<dbReference type="EnsemblFungi" id="YJL133C-A_mRNA">
    <property type="protein sequence ID" value="YJL133C-A"/>
    <property type="gene ID" value="YJL133C-A"/>
</dbReference>
<dbReference type="KEGG" id="sce:YJL133C-A"/>
<dbReference type="AGR" id="SGD:S000028805"/>
<dbReference type="SGD" id="S000028805">
    <property type="gene designation" value="YJL133C-A"/>
</dbReference>
<dbReference type="VEuPathDB" id="FungiDB:YJL133C-A"/>
<dbReference type="eggNOG" id="ENOG502SFDY">
    <property type="taxonomic scope" value="Eukaryota"/>
</dbReference>
<dbReference type="HOGENOM" id="CLU_200666_0_0_1"/>
<dbReference type="InParanoid" id="Q3E7A3"/>
<dbReference type="OMA" id="MIAQNSR"/>
<dbReference type="OrthoDB" id="4052953at2759"/>
<dbReference type="BioCyc" id="YEAST:G3O-31810-MONOMER"/>
<dbReference type="BioGRID-ORCS" id="1466465">
    <property type="hits" value="2 hits in 10 CRISPR screens"/>
</dbReference>
<dbReference type="PRO" id="PR:Q3E7A3"/>
<dbReference type="Proteomes" id="UP000002311">
    <property type="component" value="Chromosome X"/>
</dbReference>
<dbReference type="RNAct" id="Q3E7A3">
    <property type="molecule type" value="protein"/>
</dbReference>
<dbReference type="GO" id="GO:0005741">
    <property type="term" value="C:mitochondrial outer membrane"/>
    <property type="evidence" value="ECO:0007669"/>
    <property type="project" value="UniProtKB-SubCell"/>
</dbReference>
<dbReference type="GO" id="GO:0005739">
    <property type="term" value="C:mitochondrion"/>
    <property type="evidence" value="ECO:0007005"/>
    <property type="project" value="SGD"/>
</dbReference>
<name>YJ133_YEAST</name>
<organism>
    <name type="scientific">Saccharomyces cerevisiae (strain ATCC 204508 / S288c)</name>
    <name type="common">Baker's yeast</name>
    <dbReference type="NCBI Taxonomy" id="559292"/>
    <lineage>
        <taxon>Eukaryota</taxon>
        <taxon>Fungi</taxon>
        <taxon>Dikarya</taxon>
        <taxon>Ascomycota</taxon>
        <taxon>Saccharomycotina</taxon>
        <taxon>Saccharomycetes</taxon>
        <taxon>Saccharomycetales</taxon>
        <taxon>Saccharomycetaceae</taxon>
        <taxon>Saccharomyces</taxon>
    </lineage>
</organism>
<feature type="chain" id="PRO_0000245409" description="Uncharacterized protein YJL133C-A">
    <location>
        <begin position="1"/>
        <end position="74"/>
    </location>
</feature>
<feature type="transmembrane region" description="Helical" evidence="1">
    <location>
        <begin position="8"/>
        <end position="30"/>
    </location>
</feature>
<protein>
    <recommendedName>
        <fullName>Uncharacterized protein YJL133C-A</fullName>
    </recommendedName>
</protein>
<reference key="1">
    <citation type="journal article" date="1996" name="EMBO J.">
        <title>Complete nucleotide sequence of Saccharomyces cerevisiae chromosome X.</title>
        <authorList>
            <person name="Galibert F."/>
            <person name="Alexandraki D."/>
            <person name="Baur A."/>
            <person name="Boles E."/>
            <person name="Chalwatzis N."/>
            <person name="Chuat J.-C."/>
            <person name="Coster F."/>
            <person name="Cziepluch C."/>
            <person name="de Haan M."/>
            <person name="Domdey H."/>
            <person name="Durand P."/>
            <person name="Entian K.-D."/>
            <person name="Gatius M."/>
            <person name="Goffeau A."/>
            <person name="Grivell L.A."/>
            <person name="Hennemann A."/>
            <person name="Herbert C.J."/>
            <person name="Heumann K."/>
            <person name="Hilger F."/>
            <person name="Hollenberg C.P."/>
            <person name="Huang M.-E."/>
            <person name="Jacq C."/>
            <person name="Jauniaux J.-C."/>
            <person name="Katsoulou C."/>
            <person name="Kirchrath L."/>
            <person name="Kleine K."/>
            <person name="Kordes E."/>
            <person name="Koetter P."/>
            <person name="Liebl S."/>
            <person name="Louis E.J."/>
            <person name="Manus V."/>
            <person name="Mewes H.-W."/>
            <person name="Miosga T."/>
            <person name="Obermaier B."/>
            <person name="Perea J."/>
            <person name="Pohl T.M."/>
            <person name="Portetelle D."/>
            <person name="Pujol A."/>
            <person name="Purnelle B."/>
            <person name="Ramezani Rad M."/>
            <person name="Rasmussen S.W."/>
            <person name="Rose M."/>
            <person name="Rossau R."/>
            <person name="Schaaff-Gerstenschlaeger I."/>
            <person name="Smits P.H.M."/>
            <person name="Scarcez T."/>
            <person name="Soriano N."/>
            <person name="To Van D."/>
            <person name="Tzermia M."/>
            <person name="Van Broekhoven A."/>
            <person name="Vandenbol M."/>
            <person name="Wedler H."/>
            <person name="von Wettstein D."/>
            <person name="Wambutt R."/>
            <person name="Zagulski M."/>
            <person name="Zollner A."/>
            <person name="Karpfinger-Hartl L."/>
        </authorList>
    </citation>
    <scope>NUCLEOTIDE SEQUENCE [LARGE SCALE GENOMIC DNA]</scope>
    <source>
        <strain>ATCC 204508 / S288c</strain>
    </source>
</reference>
<reference key="2">
    <citation type="journal article" date="2014" name="G3 (Bethesda)">
        <title>The reference genome sequence of Saccharomyces cerevisiae: Then and now.</title>
        <authorList>
            <person name="Engel S.R."/>
            <person name="Dietrich F.S."/>
            <person name="Fisk D.G."/>
            <person name="Binkley G."/>
            <person name="Balakrishnan R."/>
            <person name="Costanzo M.C."/>
            <person name="Dwight S.S."/>
            <person name="Hitz B.C."/>
            <person name="Karra K."/>
            <person name="Nash R.S."/>
            <person name="Weng S."/>
            <person name="Wong E.D."/>
            <person name="Lloyd P."/>
            <person name="Skrzypek M.S."/>
            <person name="Miyasato S.R."/>
            <person name="Simison M."/>
            <person name="Cherry J.M."/>
        </authorList>
    </citation>
    <scope>GENOME REANNOTATION</scope>
    <source>
        <strain>ATCC 204508 / S288c</strain>
    </source>
</reference>
<reference key="3">
    <citation type="journal article" date="2006" name="J. Proteome Res.">
        <title>Toward the complete yeast mitochondrial proteome: multidimensional separation techniques for mitochondrial proteomics.</title>
        <authorList>
            <person name="Reinders J."/>
            <person name="Zahedi R.P."/>
            <person name="Pfanner N."/>
            <person name="Meisinger C."/>
            <person name="Sickmann A."/>
        </authorList>
    </citation>
    <scope>SUBCELLULAR LOCATION [LARGE SCALE ANALYSIS]</scope>
    <scope>IDENTIFICATION BY MASS SPECTROMETRY</scope>
</reference>
<reference key="4">
    <citation type="journal article" date="2006" name="Mol. Biol. Cell">
        <title>Proteomic analysis of the yeast mitochondrial outer membrane reveals accumulation of a subclass of preproteins.</title>
        <authorList>
            <person name="Zahedi R.P."/>
            <person name="Sickmann A."/>
            <person name="Boehm A.M."/>
            <person name="Winkler C."/>
            <person name="Zufall N."/>
            <person name="Schoenfisch B."/>
            <person name="Guiard B."/>
            <person name="Pfanner N."/>
            <person name="Meisinger C."/>
        </authorList>
    </citation>
    <scope>SUBCELLULAR LOCATION</scope>
    <scope>IDENTIFICATION BY MASS SPECTROMETRY</scope>
</reference>
<reference key="5">
    <citation type="journal article" date="2012" name="Proc. Natl. Acad. Sci. U.S.A.">
        <title>N-terminal acetylome analyses and functional insights of the N-terminal acetyltransferase NatB.</title>
        <authorList>
            <person name="Van Damme P."/>
            <person name="Lasa M."/>
            <person name="Polevoda B."/>
            <person name="Gazquez C."/>
            <person name="Elosegui-Artola A."/>
            <person name="Kim D.S."/>
            <person name="De Juan-Pardo E."/>
            <person name="Demeyer K."/>
            <person name="Hole K."/>
            <person name="Larrea E."/>
            <person name="Timmerman E."/>
            <person name="Prieto J."/>
            <person name="Arnesen T."/>
            <person name="Sherman F."/>
            <person name="Gevaert K."/>
            <person name="Aldabe R."/>
        </authorList>
    </citation>
    <scope>IDENTIFICATION BY MASS SPECTROMETRY [LARGE SCALE ANALYSIS]</scope>
</reference>